<accession>B2HZ98</accession>
<proteinExistence type="inferred from homology"/>
<name>RL14_ACIBC</name>
<organism>
    <name type="scientific">Acinetobacter baumannii (strain ACICU)</name>
    <dbReference type="NCBI Taxonomy" id="405416"/>
    <lineage>
        <taxon>Bacteria</taxon>
        <taxon>Pseudomonadati</taxon>
        <taxon>Pseudomonadota</taxon>
        <taxon>Gammaproteobacteria</taxon>
        <taxon>Moraxellales</taxon>
        <taxon>Moraxellaceae</taxon>
        <taxon>Acinetobacter</taxon>
        <taxon>Acinetobacter calcoaceticus/baumannii complex</taxon>
    </lineage>
</organism>
<dbReference type="EMBL" id="CP000863">
    <property type="protein sequence ID" value="ACC58580.1"/>
    <property type="molecule type" value="Genomic_DNA"/>
</dbReference>
<dbReference type="RefSeq" id="WP_001982634.1">
    <property type="nucleotide sequence ID" value="NZ_CP031380.1"/>
</dbReference>
<dbReference type="SMR" id="B2HZ98"/>
<dbReference type="GeneID" id="97425209"/>
<dbReference type="KEGG" id="abc:ACICU_03269"/>
<dbReference type="HOGENOM" id="CLU_095071_2_1_6"/>
<dbReference type="Proteomes" id="UP000008839">
    <property type="component" value="Chromosome"/>
</dbReference>
<dbReference type="GO" id="GO:0022625">
    <property type="term" value="C:cytosolic large ribosomal subunit"/>
    <property type="evidence" value="ECO:0007669"/>
    <property type="project" value="TreeGrafter"/>
</dbReference>
<dbReference type="GO" id="GO:0070180">
    <property type="term" value="F:large ribosomal subunit rRNA binding"/>
    <property type="evidence" value="ECO:0007669"/>
    <property type="project" value="TreeGrafter"/>
</dbReference>
<dbReference type="GO" id="GO:0003735">
    <property type="term" value="F:structural constituent of ribosome"/>
    <property type="evidence" value="ECO:0007669"/>
    <property type="project" value="InterPro"/>
</dbReference>
<dbReference type="GO" id="GO:0006412">
    <property type="term" value="P:translation"/>
    <property type="evidence" value="ECO:0007669"/>
    <property type="project" value="UniProtKB-UniRule"/>
</dbReference>
<dbReference type="CDD" id="cd00337">
    <property type="entry name" value="Ribosomal_uL14"/>
    <property type="match status" value="1"/>
</dbReference>
<dbReference type="FunFam" id="2.40.150.20:FF:000001">
    <property type="entry name" value="50S ribosomal protein L14"/>
    <property type="match status" value="1"/>
</dbReference>
<dbReference type="Gene3D" id="2.40.150.20">
    <property type="entry name" value="Ribosomal protein L14"/>
    <property type="match status" value="1"/>
</dbReference>
<dbReference type="HAMAP" id="MF_01367">
    <property type="entry name" value="Ribosomal_uL14"/>
    <property type="match status" value="1"/>
</dbReference>
<dbReference type="InterPro" id="IPR000218">
    <property type="entry name" value="Ribosomal_uL14"/>
</dbReference>
<dbReference type="InterPro" id="IPR005745">
    <property type="entry name" value="Ribosomal_uL14_bac-type"/>
</dbReference>
<dbReference type="InterPro" id="IPR019972">
    <property type="entry name" value="Ribosomal_uL14_CS"/>
</dbReference>
<dbReference type="InterPro" id="IPR036853">
    <property type="entry name" value="Ribosomal_uL14_sf"/>
</dbReference>
<dbReference type="NCBIfam" id="TIGR01067">
    <property type="entry name" value="rplN_bact"/>
    <property type="match status" value="1"/>
</dbReference>
<dbReference type="PANTHER" id="PTHR11761">
    <property type="entry name" value="50S/60S RIBOSOMAL PROTEIN L14/L23"/>
    <property type="match status" value="1"/>
</dbReference>
<dbReference type="PANTHER" id="PTHR11761:SF3">
    <property type="entry name" value="LARGE RIBOSOMAL SUBUNIT PROTEIN UL14M"/>
    <property type="match status" value="1"/>
</dbReference>
<dbReference type="Pfam" id="PF00238">
    <property type="entry name" value="Ribosomal_L14"/>
    <property type="match status" value="1"/>
</dbReference>
<dbReference type="SMART" id="SM01374">
    <property type="entry name" value="Ribosomal_L14"/>
    <property type="match status" value="1"/>
</dbReference>
<dbReference type="SUPFAM" id="SSF50193">
    <property type="entry name" value="Ribosomal protein L14"/>
    <property type="match status" value="1"/>
</dbReference>
<dbReference type="PROSITE" id="PS00049">
    <property type="entry name" value="RIBOSOMAL_L14"/>
    <property type="match status" value="1"/>
</dbReference>
<reference key="1">
    <citation type="journal article" date="2008" name="Antimicrob. Agents Chemother.">
        <title>Whole-genome pyrosequencing of an epidemic multidrug-resistant Acinetobacter baumannii strain belonging to the European clone II group.</title>
        <authorList>
            <person name="Iacono M."/>
            <person name="Villa L."/>
            <person name="Fortini D."/>
            <person name="Bordoni R."/>
            <person name="Imperi F."/>
            <person name="Bonnal R.J."/>
            <person name="Sicheritz-Ponten T."/>
            <person name="De Bellis G."/>
            <person name="Visca P."/>
            <person name="Cassone A."/>
            <person name="Carattoli A."/>
        </authorList>
    </citation>
    <scope>NUCLEOTIDE SEQUENCE [LARGE SCALE GENOMIC DNA]</scope>
    <source>
        <strain>ACICU</strain>
    </source>
</reference>
<evidence type="ECO:0000255" key="1">
    <source>
        <dbReference type="HAMAP-Rule" id="MF_01367"/>
    </source>
</evidence>
<evidence type="ECO:0000305" key="2"/>
<keyword id="KW-0687">Ribonucleoprotein</keyword>
<keyword id="KW-0689">Ribosomal protein</keyword>
<keyword id="KW-0694">RNA-binding</keyword>
<keyword id="KW-0699">rRNA-binding</keyword>
<protein>
    <recommendedName>
        <fullName evidence="1">Large ribosomal subunit protein uL14</fullName>
    </recommendedName>
    <alternativeName>
        <fullName evidence="2">50S ribosomal protein L14</fullName>
    </alternativeName>
</protein>
<gene>
    <name evidence="1" type="primary">rplN</name>
    <name type="ordered locus">ACICU_03269</name>
</gene>
<feature type="chain" id="PRO_1000144207" description="Large ribosomal subunit protein uL14">
    <location>
        <begin position="1"/>
        <end position="122"/>
    </location>
</feature>
<sequence>MIQTETMLDVADNSGARRVQCIKVLGGSHRRYASVGDIIKVTVKEAIPRARVKKGDVMNAVVVRTKFGIRRPDGSVIRFDDNAAVILNNNKAPIATRIFGPVTRELRTEQFMKIISLAPEVL</sequence>
<comment type="function">
    <text evidence="1">Binds to 23S rRNA. Forms part of two intersubunit bridges in the 70S ribosome.</text>
</comment>
<comment type="subunit">
    <text evidence="1">Part of the 50S ribosomal subunit. Forms a cluster with proteins L3 and L19. In the 70S ribosome, L14 and L19 interact and together make contacts with the 16S rRNA in bridges B5 and B8.</text>
</comment>
<comment type="similarity">
    <text evidence="1">Belongs to the universal ribosomal protein uL14 family.</text>
</comment>